<proteinExistence type="inferred from homology"/>
<comment type="function">
    <text evidence="1">Catalyzes the attachment of L-aspartate to tRNA(Asp) in a two-step reaction: L-aspartate is first activated by ATP to form Asp-AMP and then transferred to the acceptor end of tRNA(Asp).</text>
</comment>
<comment type="catalytic activity">
    <reaction evidence="1">
        <text>tRNA(Asp) + L-aspartate + ATP = L-aspartyl-tRNA(Asp) + AMP + diphosphate</text>
        <dbReference type="Rhea" id="RHEA:19649"/>
        <dbReference type="Rhea" id="RHEA-COMP:9660"/>
        <dbReference type="Rhea" id="RHEA-COMP:9678"/>
        <dbReference type="ChEBI" id="CHEBI:29991"/>
        <dbReference type="ChEBI" id="CHEBI:30616"/>
        <dbReference type="ChEBI" id="CHEBI:33019"/>
        <dbReference type="ChEBI" id="CHEBI:78442"/>
        <dbReference type="ChEBI" id="CHEBI:78516"/>
        <dbReference type="ChEBI" id="CHEBI:456215"/>
        <dbReference type="EC" id="6.1.1.12"/>
    </reaction>
</comment>
<comment type="subunit">
    <text evidence="1">Homodimer.</text>
</comment>
<comment type="subcellular location">
    <subcellularLocation>
        <location evidence="1">Cytoplasm</location>
    </subcellularLocation>
</comment>
<comment type="similarity">
    <text evidence="1">Belongs to the class-II aminoacyl-tRNA synthetase family. Type 1 subfamily.</text>
</comment>
<gene>
    <name evidence="1" type="primary">aspS</name>
    <name type="ordered locus">SSU98_2143</name>
</gene>
<protein>
    <recommendedName>
        <fullName evidence="1">Aspartate--tRNA ligase</fullName>
        <ecNumber evidence="1">6.1.1.12</ecNumber>
    </recommendedName>
    <alternativeName>
        <fullName evidence="1">Aspartyl-tRNA synthetase</fullName>
        <shortName evidence="1">AspRS</shortName>
    </alternativeName>
</protein>
<sequence>MKRSMYAGRVRKEHVGQEITLKGWVGRRRGLGGLIFIDLRDREGIMQLVINPESVEAEVMAKAESLRSEFVIEVTGTVVEREQANDNIPTGAVELQVTSLTVLNTAKTTPFEIKDGIEASDDTRLRYRYLDLRRPEMLNNFKLRAAVTHSIRNYLDDLEFIDVETPMLTKSTPEGARDYLVPSRVSKGHFYALPQSPQITKQLLMNAGFDRYYQIVKCFRDEDLRGDRQPEFTQVDLETSFLNEVEIQDIVEGLIAKVLKDTKGIDVTLPFPRMAYDHAMNFYGSDKPDTRFEMLLQDLTELVKEVDFKVFSEAPVVKAIVVKGAADSYSRKDIDKLTDYAKQFGAKGLAWVKVDKGELAGPVAKFLTGITEKLTASLQLEDKDLVLFVADELEVANNTLGALRNRLAKEQGLIDESKFNFLWIVDWPMFEWSEEEGRYMSAHHPFTLPTEETAHHLDGDLAQVRAVAYDIVLNGYELGGGSLRINQKDMQEQMFKALGFSAEDAHEQFGFLLEAMDYGFPPHGGLAIGLDRFVMLLAGEDNIREVIAFPKNNKASDPMTQAPSTVASAQLEELALDITLENE</sequence>
<evidence type="ECO:0000255" key="1">
    <source>
        <dbReference type="HAMAP-Rule" id="MF_00044"/>
    </source>
</evidence>
<reference key="1">
    <citation type="journal article" date="2007" name="PLoS ONE">
        <title>A glimpse of streptococcal toxic shock syndrome from comparative genomics of S. suis 2 Chinese isolates.</title>
        <authorList>
            <person name="Chen C."/>
            <person name="Tang J."/>
            <person name="Dong W."/>
            <person name="Wang C."/>
            <person name="Feng Y."/>
            <person name="Wang J."/>
            <person name="Zheng F."/>
            <person name="Pan X."/>
            <person name="Liu D."/>
            <person name="Li M."/>
            <person name="Song Y."/>
            <person name="Zhu X."/>
            <person name="Sun H."/>
            <person name="Feng T."/>
            <person name="Guo Z."/>
            <person name="Ju A."/>
            <person name="Ge J."/>
            <person name="Dong Y."/>
            <person name="Sun W."/>
            <person name="Jiang Y."/>
            <person name="Wang J."/>
            <person name="Yan J."/>
            <person name="Yang H."/>
            <person name="Wang X."/>
            <person name="Gao G.F."/>
            <person name="Yang R."/>
            <person name="Wang J."/>
            <person name="Yu J."/>
        </authorList>
    </citation>
    <scope>NUCLEOTIDE SEQUENCE [LARGE SCALE GENOMIC DNA]</scope>
    <source>
        <strain>98HAH33</strain>
    </source>
</reference>
<feature type="chain" id="PRO_1000006770" description="Aspartate--tRNA ligase">
    <location>
        <begin position="1"/>
        <end position="583"/>
    </location>
</feature>
<feature type="region of interest" description="Aspartate" evidence="1">
    <location>
        <begin position="198"/>
        <end position="201"/>
    </location>
</feature>
<feature type="binding site" evidence="1">
    <location>
        <position position="174"/>
    </location>
    <ligand>
        <name>L-aspartate</name>
        <dbReference type="ChEBI" id="CHEBI:29991"/>
    </ligand>
</feature>
<feature type="binding site" evidence="1">
    <location>
        <begin position="220"/>
        <end position="222"/>
    </location>
    <ligand>
        <name>ATP</name>
        <dbReference type="ChEBI" id="CHEBI:30616"/>
    </ligand>
</feature>
<feature type="binding site" evidence="1">
    <location>
        <position position="220"/>
    </location>
    <ligand>
        <name>L-aspartate</name>
        <dbReference type="ChEBI" id="CHEBI:29991"/>
    </ligand>
</feature>
<feature type="binding site" evidence="1">
    <location>
        <position position="229"/>
    </location>
    <ligand>
        <name>ATP</name>
        <dbReference type="ChEBI" id="CHEBI:30616"/>
    </ligand>
</feature>
<feature type="binding site" evidence="1">
    <location>
        <position position="443"/>
    </location>
    <ligand>
        <name>L-aspartate</name>
        <dbReference type="ChEBI" id="CHEBI:29991"/>
    </ligand>
</feature>
<feature type="binding site" evidence="1">
    <location>
        <position position="477"/>
    </location>
    <ligand>
        <name>ATP</name>
        <dbReference type="ChEBI" id="CHEBI:30616"/>
    </ligand>
</feature>
<feature type="binding site" evidence="1">
    <location>
        <position position="484"/>
    </location>
    <ligand>
        <name>L-aspartate</name>
        <dbReference type="ChEBI" id="CHEBI:29991"/>
    </ligand>
</feature>
<feature type="binding site" evidence="1">
    <location>
        <begin position="529"/>
        <end position="532"/>
    </location>
    <ligand>
        <name>ATP</name>
        <dbReference type="ChEBI" id="CHEBI:30616"/>
    </ligand>
</feature>
<dbReference type="EC" id="6.1.1.12" evidence="1"/>
<dbReference type="EMBL" id="CP000408">
    <property type="protein sequence ID" value="ABP93301.1"/>
    <property type="molecule type" value="Genomic_DNA"/>
</dbReference>
<dbReference type="SMR" id="A4W4L2"/>
<dbReference type="KEGG" id="ssv:SSU98_2143"/>
<dbReference type="HOGENOM" id="CLU_014330_3_2_9"/>
<dbReference type="GO" id="GO:0005737">
    <property type="term" value="C:cytoplasm"/>
    <property type="evidence" value="ECO:0007669"/>
    <property type="project" value="UniProtKB-SubCell"/>
</dbReference>
<dbReference type="GO" id="GO:0004815">
    <property type="term" value="F:aspartate-tRNA ligase activity"/>
    <property type="evidence" value="ECO:0007669"/>
    <property type="project" value="UniProtKB-UniRule"/>
</dbReference>
<dbReference type="GO" id="GO:0005524">
    <property type="term" value="F:ATP binding"/>
    <property type="evidence" value="ECO:0007669"/>
    <property type="project" value="UniProtKB-UniRule"/>
</dbReference>
<dbReference type="GO" id="GO:0140096">
    <property type="term" value="F:catalytic activity, acting on a protein"/>
    <property type="evidence" value="ECO:0007669"/>
    <property type="project" value="UniProtKB-ARBA"/>
</dbReference>
<dbReference type="GO" id="GO:0003676">
    <property type="term" value="F:nucleic acid binding"/>
    <property type="evidence" value="ECO:0007669"/>
    <property type="project" value="InterPro"/>
</dbReference>
<dbReference type="GO" id="GO:0016740">
    <property type="term" value="F:transferase activity"/>
    <property type="evidence" value="ECO:0007669"/>
    <property type="project" value="UniProtKB-ARBA"/>
</dbReference>
<dbReference type="GO" id="GO:0006422">
    <property type="term" value="P:aspartyl-tRNA aminoacylation"/>
    <property type="evidence" value="ECO:0007669"/>
    <property type="project" value="UniProtKB-UniRule"/>
</dbReference>
<dbReference type="CDD" id="cd00777">
    <property type="entry name" value="AspRS_core"/>
    <property type="match status" value="1"/>
</dbReference>
<dbReference type="CDD" id="cd04317">
    <property type="entry name" value="EcAspRS_like_N"/>
    <property type="match status" value="1"/>
</dbReference>
<dbReference type="Gene3D" id="3.30.930.10">
    <property type="entry name" value="Bira Bifunctional Protein, Domain 2"/>
    <property type="match status" value="1"/>
</dbReference>
<dbReference type="Gene3D" id="3.30.1360.30">
    <property type="entry name" value="GAD-like domain"/>
    <property type="match status" value="1"/>
</dbReference>
<dbReference type="Gene3D" id="2.40.50.140">
    <property type="entry name" value="Nucleic acid-binding proteins"/>
    <property type="match status" value="1"/>
</dbReference>
<dbReference type="HAMAP" id="MF_00044">
    <property type="entry name" value="Asp_tRNA_synth_type1"/>
    <property type="match status" value="1"/>
</dbReference>
<dbReference type="InterPro" id="IPR004364">
    <property type="entry name" value="Aa-tRNA-synt_II"/>
</dbReference>
<dbReference type="InterPro" id="IPR006195">
    <property type="entry name" value="aa-tRNA-synth_II"/>
</dbReference>
<dbReference type="InterPro" id="IPR045864">
    <property type="entry name" value="aa-tRNA-synth_II/BPL/LPL"/>
</dbReference>
<dbReference type="InterPro" id="IPR004524">
    <property type="entry name" value="Asp-tRNA-ligase_1"/>
</dbReference>
<dbReference type="InterPro" id="IPR047089">
    <property type="entry name" value="Asp-tRNA-ligase_1_N"/>
</dbReference>
<dbReference type="InterPro" id="IPR002312">
    <property type="entry name" value="Asp/Asn-tRNA-synth_IIb"/>
</dbReference>
<dbReference type="InterPro" id="IPR047090">
    <property type="entry name" value="AspRS_core"/>
</dbReference>
<dbReference type="InterPro" id="IPR004115">
    <property type="entry name" value="GAD-like_sf"/>
</dbReference>
<dbReference type="InterPro" id="IPR029351">
    <property type="entry name" value="GAD_dom"/>
</dbReference>
<dbReference type="InterPro" id="IPR012340">
    <property type="entry name" value="NA-bd_OB-fold"/>
</dbReference>
<dbReference type="InterPro" id="IPR004365">
    <property type="entry name" value="NA-bd_OB_tRNA"/>
</dbReference>
<dbReference type="NCBIfam" id="TIGR00459">
    <property type="entry name" value="aspS_bact"/>
    <property type="match status" value="1"/>
</dbReference>
<dbReference type="NCBIfam" id="NF001750">
    <property type="entry name" value="PRK00476.1"/>
    <property type="match status" value="1"/>
</dbReference>
<dbReference type="PANTHER" id="PTHR22594:SF5">
    <property type="entry name" value="ASPARTATE--TRNA LIGASE, MITOCHONDRIAL"/>
    <property type="match status" value="1"/>
</dbReference>
<dbReference type="PANTHER" id="PTHR22594">
    <property type="entry name" value="ASPARTYL/LYSYL-TRNA SYNTHETASE"/>
    <property type="match status" value="1"/>
</dbReference>
<dbReference type="Pfam" id="PF02938">
    <property type="entry name" value="GAD"/>
    <property type="match status" value="1"/>
</dbReference>
<dbReference type="Pfam" id="PF00152">
    <property type="entry name" value="tRNA-synt_2"/>
    <property type="match status" value="1"/>
</dbReference>
<dbReference type="Pfam" id="PF01336">
    <property type="entry name" value="tRNA_anti-codon"/>
    <property type="match status" value="1"/>
</dbReference>
<dbReference type="PRINTS" id="PR01042">
    <property type="entry name" value="TRNASYNTHASP"/>
</dbReference>
<dbReference type="SUPFAM" id="SSF55681">
    <property type="entry name" value="Class II aaRS and biotin synthetases"/>
    <property type="match status" value="1"/>
</dbReference>
<dbReference type="SUPFAM" id="SSF55261">
    <property type="entry name" value="GAD domain-like"/>
    <property type="match status" value="1"/>
</dbReference>
<dbReference type="SUPFAM" id="SSF50249">
    <property type="entry name" value="Nucleic acid-binding proteins"/>
    <property type="match status" value="1"/>
</dbReference>
<dbReference type="PROSITE" id="PS50862">
    <property type="entry name" value="AA_TRNA_LIGASE_II"/>
    <property type="match status" value="1"/>
</dbReference>
<accession>A4W4L2</accession>
<name>SYD_STRS2</name>
<organism>
    <name type="scientific">Streptococcus suis (strain 98HAH33)</name>
    <dbReference type="NCBI Taxonomy" id="391296"/>
    <lineage>
        <taxon>Bacteria</taxon>
        <taxon>Bacillati</taxon>
        <taxon>Bacillota</taxon>
        <taxon>Bacilli</taxon>
        <taxon>Lactobacillales</taxon>
        <taxon>Streptococcaceae</taxon>
        <taxon>Streptococcus</taxon>
    </lineage>
</organism>
<keyword id="KW-0030">Aminoacyl-tRNA synthetase</keyword>
<keyword id="KW-0067">ATP-binding</keyword>
<keyword id="KW-0963">Cytoplasm</keyword>
<keyword id="KW-0436">Ligase</keyword>
<keyword id="KW-0547">Nucleotide-binding</keyword>
<keyword id="KW-0648">Protein biosynthesis</keyword>